<accession>Q83D76</accession>
<sequence length="127" mass="14578">MRHYEIVILVHPDQSSQVPAMVERYQSMIKEKDGKVHRLEDWGRRQLAYSIDKVHKAHYLLMNIESDQGVISELENAFRYNDAVIRSLILKRDHAITKSSLIMQGAEKGKSSRKEKVAAEAEASEEA</sequence>
<evidence type="ECO:0000255" key="1">
    <source>
        <dbReference type="HAMAP-Rule" id="MF_00360"/>
    </source>
</evidence>
<evidence type="ECO:0000256" key="2">
    <source>
        <dbReference type="SAM" id="MobiDB-lite"/>
    </source>
</evidence>
<evidence type="ECO:0000305" key="3"/>
<gene>
    <name evidence="1" type="primary">rpsF</name>
    <name type="ordered locus">CBU_0864</name>
</gene>
<organism>
    <name type="scientific">Coxiella burnetii (strain RSA 493 / Nine Mile phase I)</name>
    <dbReference type="NCBI Taxonomy" id="227377"/>
    <lineage>
        <taxon>Bacteria</taxon>
        <taxon>Pseudomonadati</taxon>
        <taxon>Pseudomonadota</taxon>
        <taxon>Gammaproteobacteria</taxon>
        <taxon>Legionellales</taxon>
        <taxon>Coxiellaceae</taxon>
        <taxon>Coxiella</taxon>
    </lineage>
</organism>
<feature type="chain" id="PRO_0000176760" description="Small ribosomal subunit protein bS6">
    <location>
        <begin position="1"/>
        <end position="127"/>
    </location>
</feature>
<feature type="region of interest" description="Disordered" evidence="2">
    <location>
        <begin position="104"/>
        <end position="127"/>
    </location>
</feature>
<feature type="compositionally biased region" description="Basic and acidic residues" evidence="2">
    <location>
        <begin position="107"/>
        <end position="119"/>
    </location>
</feature>
<reference key="1">
    <citation type="journal article" date="2003" name="Proc. Natl. Acad. Sci. U.S.A.">
        <title>Complete genome sequence of the Q-fever pathogen, Coxiella burnetii.</title>
        <authorList>
            <person name="Seshadri R."/>
            <person name="Paulsen I.T."/>
            <person name="Eisen J.A."/>
            <person name="Read T.D."/>
            <person name="Nelson K.E."/>
            <person name="Nelson W.C."/>
            <person name="Ward N.L."/>
            <person name="Tettelin H."/>
            <person name="Davidsen T.M."/>
            <person name="Beanan M.J."/>
            <person name="DeBoy R.T."/>
            <person name="Daugherty S.C."/>
            <person name="Brinkac L.M."/>
            <person name="Madupu R."/>
            <person name="Dodson R.J."/>
            <person name="Khouri H.M."/>
            <person name="Lee K.H."/>
            <person name="Carty H.A."/>
            <person name="Scanlan D."/>
            <person name="Heinzen R.A."/>
            <person name="Thompson H.A."/>
            <person name="Samuel J.E."/>
            <person name="Fraser C.M."/>
            <person name="Heidelberg J.F."/>
        </authorList>
    </citation>
    <scope>NUCLEOTIDE SEQUENCE [LARGE SCALE GENOMIC DNA]</scope>
    <source>
        <strain>RSA 493 / Nine Mile phase I</strain>
    </source>
</reference>
<dbReference type="EMBL" id="AE016828">
    <property type="protein sequence ID" value="AAO90397.1"/>
    <property type="molecule type" value="Genomic_DNA"/>
</dbReference>
<dbReference type="RefSeq" id="NP_819883.1">
    <property type="nucleotide sequence ID" value="NC_002971.4"/>
</dbReference>
<dbReference type="RefSeq" id="WP_010957857.1">
    <property type="nucleotide sequence ID" value="NZ_CCYB01000044.1"/>
</dbReference>
<dbReference type="SMR" id="Q83D76"/>
<dbReference type="STRING" id="227377.CBU_0864"/>
<dbReference type="DNASU" id="1208757"/>
<dbReference type="EnsemblBacteria" id="AAO90397">
    <property type="protein sequence ID" value="AAO90397"/>
    <property type="gene ID" value="CBU_0864"/>
</dbReference>
<dbReference type="GeneID" id="1208757"/>
<dbReference type="KEGG" id="cbu:CBU_0864"/>
<dbReference type="PATRIC" id="fig|227377.7.peg.849"/>
<dbReference type="eggNOG" id="COG0360">
    <property type="taxonomic scope" value="Bacteria"/>
</dbReference>
<dbReference type="HOGENOM" id="CLU_113441_6_1_6"/>
<dbReference type="OrthoDB" id="9812702at2"/>
<dbReference type="Proteomes" id="UP000002671">
    <property type="component" value="Chromosome"/>
</dbReference>
<dbReference type="GO" id="GO:0022627">
    <property type="term" value="C:cytosolic small ribosomal subunit"/>
    <property type="evidence" value="ECO:0000318"/>
    <property type="project" value="GO_Central"/>
</dbReference>
<dbReference type="GO" id="GO:0070181">
    <property type="term" value="F:small ribosomal subunit rRNA binding"/>
    <property type="evidence" value="ECO:0000318"/>
    <property type="project" value="GO_Central"/>
</dbReference>
<dbReference type="GO" id="GO:0003735">
    <property type="term" value="F:structural constituent of ribosome"/>
    <property type="evidence" value="ECO:0000318"/>
    <property type="project" value="GO_Central"/>
</dbReference>
<dbReference type="GO" id="GO:0006412">
    <property type="term" value="P:translation"/>
    <property type="evidence" value="ECO:0007669"/>
    <property type="project" value="UniProtKB-UniRule"/>
</dbReference>
<dbReference type="CDD" id="cd00473">
    <property type="entry name" value="bS6"/>
    <property type="match status" value="1"/>
</dbReference>
<dbReference type="FunFam" id="3.30.70.60:FF:000003">
    <property type="entry name" value="30S ribosomal protein S6"/>
    <property type="match status" value="1"/>
</dbReference>
<dbReference type="Gene3D" id="3.30.70.60">
    <property type="match status" value="1"/>
</dbReference>
<dbReference type="HAMAP" id="MF_00360">
    <property type="entry name" value="Ribosomal_bS6"/>
    <property type="match status" value="1"/>
</dbReference>
<dbReference type="InterPro" id="IPR000529">
    <property type="entry name" value="Ribosomal_bS6"/>
</dbReference>
<dbReference type="InterPro" id="IPR035980">
    <property type="entry name" value="Ribosomal_bS6_sf"/>
</dbReference>
<dbReference type="InterPro" id="IPR020814">
    <property type="entry name" value="Ribosomal_S6_plastid/chlpt"/>
</dbReference>
<dbReference type="InterPro" id="IPR014717">
    <property type="entry name" value="Transl_elong_EF1B/ribsomal_bS6"/>
</dbReference>
<dbReference type="NCBIfam" id="TIGR00166">
    <property type="entry name" value="S6"/>
    <property type="match status" value="1"/>
</dbReference>
<dbReference type="PANTHER" id="PTHR21011">
    <property type="entry name" value="MITOCHONDRIAL 28S RIBOSOMAL PROTEIN S6"/>
    <property type="match status" value="1"/>
</dbReference>
<dbReference type="PANTHER" id="PTHR21011:SF1">
    <property type="entry name" value="SMALL RIBOSOMAL SUBUNIT PROTEIN BS6M"/>
    <property type="match status" value="1"/>
</dbReference>
<dbReference type="Pfam" id="PF01250">
    <property type="entry name" value="Ribosomal_S6"/>
    <property type="match status" value="1"/>
</dbReference>
<dbReference type="SUPFAM" id="SSF54995">
    <property type="entry name" value="Ribosomal protein S6"/>
    <property type="match status" value="1"/>
</dbReference>
<keyword id="KW-1185">Reference proteome</keyword>
<keyword id="KW-0687">Ribonucleoprotein</keyword>
<keyword id="KW-0689">Ribosomal protein</keyword>
<keyword id="KW-0694">RNA-binding</keyword>
<keyword id="KW-0699">rRNA-binding</keyword>
<proteinExistence type="inferred from homology"/>
<comment type="function">
    <text evidence="1">Binds together with bS18 to 16S ribosomal RNA.</text>
</comment>
<comment type="similarity">
    <text evidence="1">Belongs to the bacterial ribosomal protein bS6 family.</text>
</comment>
<name>RS6_COXBU</name>
<protein>
    <recommendedName>
        <fullName evidence="1">Small ribosomal subunit protein bS6</fullName>
    </recommendedName>
    <alternativeName>
        <fullName evidence="3">30S ribosomal protein S6</fullName>
    </alternativeName>
</protein>